<evidence type="ECO:0000255" key="1">
    <source>
        <dbReference type="HAMAP-Rule" id="MF_00052"/>
    </source>
</evidence>
<evidence type="ECO:0000255" key="2">
    <source>
        <dbReference type="PROSITE-ProRule" id="PRU01319"/>
    </source>
</evidence>
<gene>
    <name evidence="1" type="primary">rnhB</name>
    <name type="ordered locus">BAMEG_0657</name>
</gene>
<keyword id="KW-0963">Cytoplasm</keyword>
<keyword id="KW-0255">Endonuclease</keyword>
<keyword id="KW-0378">Hydrolase</keyword>
<keyword id="KW-0464">Manganese</keyword>
<keyword id="KW-0479">Metal-binding</keyword>
<keyword id="KW-0540">Nuclease</keyword>
<organism>
    <name type="scientific">Bacillus anthracis (strain CDC 684 / NRRL 3495)</name>
    <dbReference type="NCBI Taxonomy" id="568206"/>
    <lineage>
        <taxon>Bacteria</taxon>
        <taxon>Bacillati</taxon>
        <taxon>Bacillota</taxon>
        <taxon>Bacilli</taxon>
        <taxon>Bacillales</taxon>
        <taxon>Bacillaceae</taxon>
        <taxon>Bacillus</taxon>
        <taxon>Bacillus cereus group</taxon>
    </lineage>
</organism>
<feature type="chain" id="PRO_1000194441" description="Ribonuclease HII">
    <location>
        <begin position="1"/>
        <end position="257"/>
    </location>
</feature>
<feature type="domain" description="RNase H type-2" evidence="2">
    <location>
        <begin position="72"/>
        <end position="257"/>
    </location>
</feature>
<feature type="binding site" evidence="1">
    <location>
        <position position="78"/>
    </location>
    <ligand>
        <name>a divalent metal cation</name>
        <dbReference type="ChEBI" id="CHEBI:60240"/>
    </ligand>
</feature>
<feature type="binding site" evidence="1">
    <location>
        <position position="79"/>
    </location>
    <ligand>
        <name>a divalent metal cation</name>
        <dbReference type="ChEBI" id="CHEBI:60240"/>
    </ligand>
</feature>
<feature type="binding site" evidence="1">
    <location>
        <position position="170"/>
    </location>
    <ligand>
        <name>a divalent metal cation</name>
        <dbReference type="ChEBI" id="CHEBI:60240"/>
    </ligand>
</feature>
<name>RNH2_BACAC</name>
<protein>
    <recommendedName>
        <fullName evidence="1">Ribonuclease HII</fullName>
        <shortName evidence="1">RNase HII</shortName>
        <ecNumber evidence="1">3.1.26.4</ecNumber>
    </recommendedName>
</protein>
<comment type="function">
    <text evidence="1">Endonuclease that specifically degrades the RNA of RNA-DNA hybrids.</text>
</comment>
<comment type="catalytic activity">
    <reaction evidence="1">
        <text>Endonucleolytic cleavage to 5'-phosphomonoester.</text>
        <dbReference type="EC" id="3.1.26.4"/>
    </reaction>
</comment>
<comment type="cofactor">
    <cofactor evidence="1">
        <name>Mn(2+)</name>
        <dbReference type="ChEBI" id="CHEBI:29035"/>
    </cofactor>
    <cofactor evidence="1">
        <name>Mg(2+)</name>
        <dbReference type="ChEBI" id="CHEBI:18420"/>
    </cofactor>
    <text evidence="1">Manganese or magnesium. Binds 1 divalent metal ion per monomer in the absence of substrate. May bind a second metal ion after substrate binding.</text>
</comment>
<comment type="subcellular location">
    <subcellularLocation>
        <location evidence="1">Cytoplasm</location>
    </subcellularLocation>
</comment>
<comment type="similarity">
    <text evidence="1">Belongs to the RNase HII family.</text>
</comment>
<dbReference type="EC" id="3.1.26.4" evidence="1"/>
<dbReference type="EMBL" id="CP001215">
    <property type="protein sequence ID" value="ACP13466.1"/>
    <property type="molecule type" value="Genomic_DNA"/>
</dbReference>
<dbReference type="RefSeq" id="WP_001174712.1">
    <property type="nucleotide sequence ID" value="NC_012581.1"/>
</dbReference>
<dbReference type="SMR" id="C3L790"/>
<dbReference type="GeneID" id="45023665"/>
<dbReference type="KEGG" id="bah:BAMEG_0657"/>
<dbReference type="HOGENOM" id="CLU_036532_2_1_9"/>
<dbReference type="GO" id="GO:0005737">
    <property type="term" value="C:cytoplasm"/>
    <property type="evidence" value="ECO:0007669"/>
    <property type="project" value="UniProtKB-SubCell"/>
</dbReference>
<dbReference type="GO" id="GO:0032299">
    <property type="term" value="C:ribonuclease H2 complex"/>
    <property type="evidence" value="ECO:0007669"/>
    <property type="project" value="TreeGrafter"/>
</dbReference>
<dbReference type="GO" id="GO:0030145">
    <property type="term" value="F:manganese ion binding"/>
    <property type="evidence" value="ECO:0007669"/>
    <property type="project" value="UniProtKB-UniRule"/>
</dbReference>
<dbReference type="GO" id="GO:0003723">
    <property type="term" value="F:RNA binding"/>
    <property type="evidence" value="ECO:0007669"/>
    <property type="project" value="InterPro"/>
</dbReference>
<dbReference type="GO" id="GO:0004523">
    <property type="term" value="F:RNA-DNA hybrid ribonuclease activity"/>
    <property type="evidence" value="ECO:0007669"/>
    <property type="project" value="UniProtKB-UniRule"/>
</dbReference>
<dbReference type="GO" id="GO:0043137">
    <property type="term" value="P:DNA replication, removal of RNA primer"/>
    <property type="evidence" value="ECO:0007669"/>
    <property type="project" value="TreeGrafter"/>
</dbReference>
<dbReference type="GO" id="GO:0006298">
    <property type="term" value="P:mismatch repair"/>
    <property type="evidence" value="ECO:0007669"/>
    <property type="project" value="TreeGrafter"/>
</dbReference>
<dbReference type="CDD" id="cd07182">
    <property type="entry name" value="RNase_HII_bacteria_HII_like"/>
    <property type="match status" value="1"/>
</dbReference>
<dbReference type="FunFam" id="3.30.420.10:FF:000006">
    <property type="entry name" value="Ribonuclease HII"/>
    <property type="match status" value="1"/>
</dbReference>
<dbReference type="Gene3D" id="3.30.420.10">
    <property type="entry name" value="Ribonuclease H-like superfamily/Ribonuclease H"/>
    <property type="match status" value="1"/>
</dbReference>
<dbReference type="HAMAP" id="MF_00052_B">
    <property type="entry name" value="RNase_HII_B"/>
    <property type="match status" value="1"/>
</dbReference>
<dbReference type="InterPro" id="IPR022898">
    <property type="entry name" value="RNase_HII"/>
</dbReference>
<dbReference type="InterPro" id="IPR001352">
    <property type="entry name" value="RNase_HII/HIII"/>
</dbReference>
<dbReference type="InterPro" id="IPR024567">
    <property type="entry name" value="RNase_HII/HIII_dom"/>
</dbReference>
<dbReference type="InterPro" id="IPR012337">
    <property type="entry name" value="RNaseH-like_sf"/>
</dbReference>
<dbReference type="InterPro" id="IPR036397">
    <property type="entry name" value="RNaseH_sf"/>
</dbReference>
<dbReference type="NCBIfam" id="NF000594">
    <property type="entry name" value="PRK00015.1-1"/>
    <property type="match status" value="1"/>
</dbReference>
<dbReference type="NCBIfam" id="NF000595">
    <property type="entry name" value="PRK00015.1-3"/>
    <property type="match status" value="1"/>
</dbReference>
<dbReference type="PANTHER" id="PTHR10954">
    <property type="entry name" value="RIBONUCLEASE H2 SUBUNIT A"/>
    <property type="match status" value="1"/>
</dbReference>
<dbReference type="PANTHER" id="PTHR10954:SF18">
    <property type="entry name" value="RIBONUCLEASE HII"/>
    <property type="match status" value="1"/>
</dbReference>
<dbReference type="Pfam" id="PF01351">
    <property type="entry name" value="RNase_HII"/>
    <property type="match status" value="1"/>
</dbReference>
<dbReference type="SUPFAM" id="SSF53098">
    <property type="entry name" value="Ribonuclease H-like"/>
    <property type="match status" value="1"/>
</dbReference>
<dbReference type="PROSITE" id="PS51975">
    <property type="entry name" value="RNASE_H_2"/>
    <property type="match status" value="1"/>
</dbReference>
<sequence>MQKVTIQEAEHLLQEIISEEDDRFQILIKDERKGVQKLISKWYKQKELAQKEKEKFLEMSKYENALREKGLTYIAGIDEVGRGPLAGPVVTAAVILPEDFYIPGLNDSKKLSEAKRERFYGEIKAKAIAIGVGIVSPQVIDEINIYQATKQAMLDAIANLSCTPEYLLIDAMKLPAPIPQTSIIKGDAKSISISAASIIAKVTRDRMMKELGEKYPAYGFEQHMGYGTKQHLEAIEAHGVLEEHRKSFAPIKDMIKK</sequence>
<reference key="1">
    <citation type="submission" date="2008-10" db="EMBL/GenBank/DDBJ databases">
        <title>Genome sequence of Bacillus anthracis str. CDC 684.</title>
        <authorList>
            <person name="Dodson R.J."/>
            <person name="Munk A.C."/>
            <person name="Brettin T."/>
            <person name="Bruce D."/>
            <person name="Detter C."/>
            <person name="Tapia R."/>
            <person name="Han C."/>
            <person name="Sutton G."/>
            <person name="Sims D."/>
        </authorList>
    </citation>
    <scope>NUCLEOTIDE SEQUENCE [LARGE SCALE GENOMIC DNA]</scope>
    <source>
        <strain>CDC 684 / NRRL 3495</strain>
    </source>
</reference>
<accession>C3L790</accession>
<proteinExistence type="inferred from homology"/>